<keyword id="KW-0406">Ion transport</keyword>
<keyword id="KW-0408">Iron</keyword>
<keyword id="KW-0410">Iron transport</keyword>
<keyword id="KW-0813">Transport</keyword>
<sequence length="78" mass="8890">MTLNEAIKDKTYEIVEIANCDEALKKRFLSFGIHEGVQCTLLHSSMKKATLSIKINRIQVALRSHEAQYLIIKESAQE</sequence>
<comment type="function">
    <text evidence="1">Might be involved in Fe(2+) ion uptake (By similarity).</text>
</comment>
<comment type="similarity">
    <text evidence="2">Belongs to the FeoA family.</text>
</comment>
<name>FEOA_HELPJ</name>
<evidence type="ECO:0000250" key="1">
    <source>
        <dbReference type="UniProtKB" id="P0AEL3"/>
    </source>
</evidence>
<evidence type="ECO:0000305" key="2"/>
<feature type="chain" id="PRO_0000128692" description="Putative Fe(2+) transport protein A">
    <location>
        <begin position="1"/>
        <end position="78"/>
    </location>
</feature>
<protein>
    <recommendedName>
        <fullName>Putative Fe(2+) transport protein A</fullName>
    </recommendedName>
</protein>
<gene>
    <name type="ordered locus">jhp_0533</name>
</gene>
<organism>
    <name type="scientific">Helicobacter pylori (strain J99 / ATCC 700824)</name>
    <name type="common">Campylobacter pylori J99</name>
    <dbReference type="NCBI Taxonomy" id="85963"/>
    <lineage>
        <taxon>Bacteria</taxon>
        <taxon>Pseudomonadati</taxon>
        <taxon>Campylobacterota</taxon>
        <taxon>Epsilonproteobacteria</taxon>
        <taxon>Campylobacterales</taxon>
        <taxon>Helicobacteraceae</taxon>
        <taxon>Helicobacter</taxon>
    </lineage>
</organism>
<dbReference type="EMBL" id="AE001439">
    <property type="protein sequence ID" value="AAD06110.1"/>
    <property type="molecule type" value="Genomic_DNA"/>
</dbReference>
<dbReference type="PIR" id="C71919">
    <property type="entry name" value="C71919"/>
</dbReference>
<dbReference type="RefSeq" id="WP_000174108.1">
    <property type="nucleotide sequence ID" value="NZ_CP011330.1"/>
</dbReference>
<dbReference type="SMR" id="Q9ZLP5"/>
<dbReference type="KEGG" id="hpj:jhp_0533"/>
<dbReference type="PATRIC" id="fig|85963.30.peg.461"/>
<dbReference type="eggNOG" id="COG1918">
    <property type="taxonomic scope" value="Bacteria"/>
</dbReference>
<dbReference type="Proteomes" id="UP000000804">
    <property type="component" value="Chromosome"/>
</dbReference>
<dbReference type="GO" id="GO:0046914">
    <property type="term" value="F:transition metal ion binding"/>
    <property type="evidence" value="ECO:0007669"/>
    <property type="project" value="InterPro"/>
</dbReference>
<dbReference type="GO" id="GO:0006826">
    <property type="term" value="P:iron ion transport"/>
    <property type="evidence" value="ECO:0007669"/>
    <property type="project" value="UniProtKB-KW"/>
</dbReference>
<dbReference type="Gene3D" id="2.30.30.90">
    <property type="match status" value="1"/>
</dbReference>
<dbReference type="InterPro" id="IPR007167">
    <property type="entry name" value="Fe-transptr_FeoA-like"/>
</dbReference>
<dbReference type="InterPro" id="IPR038157">
    <property type="entry name" value="FeoA_core_dom"/>
</dbReference>
<dbReference type="InterPro" id="IPR008988">
    <property type="entry name" value="Transcriptional_repressor_C"/>
</dbReference>
<dbReference type="Pfam" id="PF04023">
    <property type="entry name" value="FeoA"/>
    <property type="match status" value="1"/>
</dbReference>
<dbReference type="SMART" id="SM00899">
    <property type="entry name" value="FeoA"/>
    <property type="match status" value="1"/>
</dbReference>
<dbReference type="SUPFAM" id="SSF50037">
    <property type="entry name" value="C-terminal domain of transcriptional repressors"/>
    <property type="match status" value="1"/>
</dbReference>
<reference key="1">
    <citation type="journal article" date="1999" name="Nature">
        <title>Genomic sequence comparison of two unrelated isolates of the human gastric pathogen Helicobacter pylori.</title>
        <authorList>
            <person name="Alm R.A."/>
            <person name="Ling L.-S.L."/>
            <person name="Moir D.T."/>
            <person name="King B.L."/>
            <person name="Brown E.D."/>
            <person name="Doig P.C."/>
            <person name="Smith D.R."/>
            <person name="Noonan B."/>
            <person name="Guild B.C."/>
            <person name="deJonge B.L."/>
            <person name="Carmel G."/>
            <person name="Tummino P.J."/>
            <person name="Caruso A."/>
            <person name="Uria-Nickelsen M."/>
            <person name="Mills D.M."/>
            <person name="Ives C."/>
            <person name="Gibson R."/>
            <person name="Merberg D."/>
            <person name="Mills S.D."/>
            <person name="Jiang Q."/>
            <person name="Taylor D.E."/>
            <person name="Vovis G.F."/>
            <person name="Trust T.J."/>
        </authorList>
    </citation>
    <scope>NUCLEOTIDE SEQUENCE [LARGE SCALE GENOMIC DNA]</scope>
    <source>
        <strain>J99 / ATCC 700824</strain>
    </source>
</reference>
<proteinExistence type="inferred from homology"/>
<accession>Q9ZLP5</accession>